<name>CCME1_XANE5</name>
<evidence type="ECO:0000255" key="1">
    <source>
        <dbReference type="HAMAP-Rule" id="MF_01959"/>
    </source>
</evidence>
<evidence type="ECO:0000256" key="2">
    <source>
        <dbReference type="SAM" id="MobiDB-lite"/>
    </source>
</evidence>
<dbReference type="EMBL" id="AM039952">
    <property type="protein sequence ID" value="CAJ23390.1"/>
    <property type="molecule type" value="Genomic_DNA"/>
</dbReference>
<dbReference type="SMR" id="Q3BUW9"/>
<dbReference type="STRING" id="456327.BJD11_13995"/>
<dbReference type="KEGG" id="xcv:XCV1713"/>
<dbReference type="eggNOG" id="COG2332">
    <property type="taxonomic scope" value="Bacteria"/>
</dbReference>
<dbReference type="HOGENOM" id="CLU_079503_1_1_6"/>
<dbReference type="Proteomes" id="UP000007069">
    <property type="component" value="Chromosome"/>
</dbReference>
<dbReference type="GO" id="GO:0005886">
    <property type="term" value="C:plasma membrane"/>
    <property type="evidence" value="ECO:0007669"/>
    <property type="project" value="UniProtKB-SubCell"/>
</dbReference>
<dbReference type="GO" id="GO:0020037">
    <property type="term" value="F:heme binding"/>
    <property type="evidence" value="ECO:0007669"/>
    <property type="project" value="InterPro"/>
</dbReference>
<dbReference type="GO" id="GO:0046872">
    <property type="term" value="F:metal ion binding"/>
    <property type="evidence" value="ECO:0007669"/>
    <property type="project" value="UniProtKB-KW"/>
</dbReference>
<dbReference type="GO" id="GO:0017004">
    <property type="term" value="P:cytochrome complex assembly"/>
    <property type="evidence" value="ECO:0007669"/>
    <property type="project" value="UniProtKB-KW"/>
</dbReference>
<dbReference type="FunFam" id="2.40.50.140:FF:000104">
    <property type="entry name" value="Cytochrome c-type biogenesis protein CcmE"/>
    <property type="match status" value="1"/>
</dbReference>
<dbReference type="Gene3D" id="2.40.50.140">
    <property type="entry name" value="Nucleic acid-binding proteins"/>
    <property type="match status" value="1"/>
</dbReference>
<dbReference type="HAMAP" id="MF_01959">
    <property type="entry name" value="CcmE"/>
    <property type="match status" value="1"/>
</dbReference>
<dbReference type="InterPro" id="IPR004329">
    <property type="entry name" value="CcmE"/>
</dbReference>
<dbReference type="InterPro" id="IPR036127">
    <property type="entry name" value="CcmE-like_sf"/>
</dbReference>
<dbReference type="InterPro" id="IPR012340">
    <property type="entry name" value="NA-bd_OB-fold"/>
</dbReference>
<dbReference type="NCBIfam" id="NF009637">
    <property type="entry name" value="PRK13159.1"/>
    <property type="match status" value="1"/>
</dbReference>
<dbReference type="NCBIfam" id="NF009727">
    <property type="entry name" value="PRK13254.1-1"/>
    <property type="match status" value="1"/>
</dbReference>
<dbReference type="NCBIfam" id="NF009729">
    <property type="entry name" value="PRK13254.1-3"/>
    <property type="match status" value="1"/>
</dbReference>
<dbReference type="NCBIfam" id="NF009731">
    <property type="entry name" value="PRK13254.1-5"/>
    <property type="match status" value="1"/>
</dbReference>
<dbReference type="PANTHER" id="PTHR34128">
    <property type="entry name" value="CYTOCHROME C-TYPE BIOGENESIS PROTEIN CCME HOMOLOG, MITOCHONDRIAL"/>
    <property type="match status" value="1"/>
</dbReference>
<dbReference type="PANTHER" id="PTHR34128:SF2">
    <property type="entry name" value="CYTOCHROME C-TYPE BIOGENESIS PROTEIN CCME HOMOLOG, MITOCHONDRIAL"/>
    <property type="match status" value="1"/>
</dbReference>
<dbReference type="Pfam" id="PF03100">
    <property type="entry name" value="CcmE"/>
    <property type="match status" value="1"/>
</dbReference>
<dbReference type="SUPFAM" id="SSF82093">
    <property type="entry name" value="Heme chaperone CcmE"/>
    <property type="match status" value="1"/>
</dbReference>
<feature type="chain" id="PRO_0000238885" description="Cytochrome c-type biogenesis protein CcmE 1">
    <location>
        <begin position="1"/>
        <end position="156"/>
    </location>
</feature>
<feature type="topological domain" description="Cytoplasmic" evidence="1">
    <location>
        <begin position="1"/>
        <end position="8"/>
    </location>
</feature>
<feature type="transmembrane region" description="Helical; Signal-anchor for type II membrane protein" evidence="1">
    <location>
        <begin position="9"/>
        <end position="29"/>
    </location>
</feature>
<feature type="topological domain" description="Periplasmic" evidence="1">
    <location>
        <begin position="30"/>
        <end position="156"/>
    </location>
</feature>
<feature type="region of interest" description="Disordered" evidence="2">
    <location>
        <begin position="137"/>
        <end position="156"/>
    </location>
</feature>
<feature type="compositionally biased region" description="Low complexity" evidence="2">
    <location>
        <begin position="146"/>
        <end position="156"/>
    </location>
</feature>
<feature type="binding site" description="covalent" evidence="1">
    <location>
        <position position="123"/>
    </location>
    <ligand>
        <name>heme</name>
        <dbReference type="ChEBI" id="CHEBI:30413"/>
    </ligand>
</feature>
<feature type="binding site" description="axial binding residue" evidence="1">
    <location>
        <position position="127"/>
    </location>
    <ligand>
        <name>heme</name>
        <dbReference type="ChEBI" id="CHEBI:30413"/>
    </ligand>
    <ligandPart>
        <name>Fe</name>
        <dbReference type="ChEBI" id="CHEBI:18248"/>
    </ligandPart>
</feature>
<gene>
    <name evidence="1" type="primary">ccmE1</name>
    <name evidence="1" type="synonym">cycJ1</name>
    <name type="ordered locus">XCV1713</name>
</gene>
<sequence length="156" mass="16956">MNATRRQRLWWVICVLTAAALAVTLIVFALQRNMSYLFTPSQVSAGEAAGYQQFRLGGMVKAGSIQRAGDSLKVSFTVIDKNAATQVEYTGILPDLFRDNQSVIANGRMQGGRFVANEVLAKHDETYMPKELKDAMAEGHAGKPIPATATPLTAPR</sequence>
<reference key="1">
    <citation type="journal article" date="2005" name="J. Bacteriol.">
        <title>Insights into genome plasticity and pathogenicity of the plant pathogenic Bacterium Xanthomonas campestris pv. vesicatoria revealed by the complete genome sequence.</title>
        <authorList>
            <person name="Thieme F."/>
            <person name="Koebnik R."/>
            <person name="Bekel T."/>
            <person name="Berger C."/>
            <person name="Boch J."/>
            <person name="Buettner D."/>
            <person name="Caldana C."/>
            <person name="Gaigalat L."/>
            <person name="Goesmann A."/>
            <person name="Kay S."/>
            <person name="Kirchner O."/>
            <person name="Lanz C."/>
            <person name="Linke B."/>
            <person name="McHardy A.C."/>
            <person name="Meyer F."/>
            <person name="Mittenhuber G."/>
            <person name="Nies D.H."/>
            <person name="Niesbach-Kloesgen U."/>
            <person name="Patschkowski T."/>
            <person name="Rueckert C."/>
            <person name="Rupp O."/>
            <person name="Schneiker S."/>
            <person name="Schuster S.C."/>
            <person name="Vorhoelter F.J."/>
            <person name="Weber E."/>
            <person name="Puehler A."/>
            <person name="Bonas U."/>
            <person name="Bartels D."/>
            <person name="Kaiser O."/>
        </authorList>
    </citation>
    <scope>NUCLEOTIDE SEQUENCE [LARGE SCALE GENOMIC DNA]</scope>
    <source>
        <strain>85-10</strain>
    </source>
</reference>
<organism>
    <name type="scientific">Xanthomonas euvesicatoria pv. vesicatoria (strain 85-10)</name>
    <name type="common">Xanthomonas campestris pv. vesicatoria</name>
    <dbReference type="NCBI Taxonomy" id="316273"/>
    <lineage>
        <taxon>Bacteria</taxon>
        <taxon>Pseudomonadati</taxon>
        <taxon>Pseudomonadota</taxon>
        <taxon>Gammaproteobacteria</taxon>
        <taxon>Lysobacterales</taxon>
        <taxon>Lysobacteraceae</taxon>
        <taxon>Xanthomonas</taxon>
    </lineage>
</organism>
<keyword id="KW-0997">Cell inner membrane</keyword>
<keyword id="KW-1003">Cell membrane</keyword>
<keyword id="KW-0201">Cytochrome c-type biogenesis</keyword>
<keyword id="KW-0349">Heme</keyword>
<keyword id="KW-0408">Iron</keyword>
<keyword id="KW-0472">Membrane</keyword>
<keyword id="KW-0479">Metal-binding</keyword>
<keyword id="KW-0735">Signal-anchor</keyword>
<keyword id="KW-0812">Transmembrane</keyword>
<keyword id="KW-1133">Transmembrane helix</keyword>
<proteinExistence type="inferred from homology"/>
<protein>
    <recommendedName>
        <fullName evidence="1">Cytochrome c-type biogenesis protein CcmE 1</fullName>
    </recommendedName>
    <alternativeName>
        <fullName evidence="1">Cytochrome c maturation protein E 1</fullName>
    </alternativeName>
    <alternativeName>
        <fullName evidence="1">Heme chaperone CcmE 1</fullName>
    </alternativeName>
</protein>
<comment type="function">
    <text evidence="1">Heme chaperone required for the biogenesis of c-type cytochromes. Transiently binds heme delivered by CcmC and transfers the heme to apo-cytochromes in a process facilitated by CcmF and CcmH.</text>
</comment>
<comment type="subcellular location">
    <subcellularLocation>
        <location evidence="1">Cell inner membrane</location>
        <topology evidence="1">Single-pass type II membrane protein</topology>
        <orientation evidence="1">Periplasmic side</orientation>
    </subcellularLocation>
</comment>
<comment type="similarity">
    <text evidence="1">Belongs to the CcmE/CycJ family.</text>
</comment>
<accession>Q3BUW9</accession>